<name>RS18_BACP2</name>
<sequence>MAGGRRGGRAKRRKVCFFTSNGITHIDYKDVDLLRKFVSERGKILPRRVTGTSAKYQRKLTLAIKKSRQMALLPYVTGE</sequence>
<gene>
    <name evidence="1" type="primary">rpsR</name>
    <name type="ordered locus">BPUM_3718</name>
</gene>
<accession>A8FJE5</accession>
<reference key="1">
    <citation type="journal article" date="2007" name="PLoS ONE">
        <title>Paradoxical DNA repair and peroxide resistance gene conservation in Bacillus pumilus SAFR-032.</title>
        <authorList>
            <person name="Gioia J."/>
            <person name="Yerrapragada S."/>
            <person name="Qin X."/>
            <person name="Jiang H."/>
            <person name="Igboeli O.C."/>
            <person name="Muzny D."/>
            <person name="Dugan-Rocha S."/>
            <person name="Ding Y."/>
            <person name="Hawes A."/>
            <person name="Liu W."/>
            <person name="Perez L."/>
            <person name="Kovar C."/>
            <person name="Dinh H."/>
            <person name="Lee S."/>
            <person name="Nazareth L."/>
            <person name="Blyth P."/>
            <person name="Holder M."/>
            <person name="Buhay C."/>
            <person name="Tirumalai M.R."/>
            <person name="Liu Y."/>
            <person name="Dasgupta I."/>
            <person name="Bokhetache L."/>
            <person name="Fujita M."/>
            <person name="Karouia F."/>
            <person name="Eswara Moorthy P."/>
            <person name="Siefert J."/>
            <person name="Uzman A."/>
            <person name="Buzumbo P."/>
            <person name="Verma A."/>
            <person name="Zwiya H."/>
            <person name="McWilliams B.D."/>
            <person name="Olowu A."/>
            <person name="Clinkenbeard K.D."/>
            <person name="Newcombe D."/>
            <person name="Golebiewski L."/>
            <person name="Petrosino J.F."/>
            <person name="Nicholson W.L."/>
            <person name="Fox G.E."/>
            <person name="Venkateswaran K."/>
            <person name="Highlander S.K."/>
            <person name="Weinstock G.M."/>
        </authorList>
    </citation>
    <scope>NUCLEOTIDE SEQUENCE [LARGE SCALE GENOMIC DNA]</scope>
    <source>
        <strain>SAFR-032</strain>
    </source>
</reference>
<comment type="function">
    <text evidence="1">Binds as a heterodimer with protein bS6 to the central domain of the 16S rRNA, where it helps stabilize the platform of the 30S subunit.</text>
</comment>
<comment type="subunit">
    <text evidence="1">Part of the 30S ribosomal subunit. Forms a tight heterodimer with protein bS6.</text>
</comment>
<comment type="similarity">
    <text evidence="1">Belongs to the bacterial ribosomal protein bS18 family.</text>
</comment>
<evidence type="ECO:0000255" key="1">
    <source>
        <dbReference type="HAMAP-Rule" id="MF_00270"/>
    </source>
</evidence>
<evidence type="ECO:0000305" key="2"/>
<keyword id="KW-0687">Ribonucleoprotein</keyword>
<keyword id="KW-0689">Ribosomal protein</keyword>
<keyword id="KW-0694">RNA-binding</keyword>
<keyword id="KW-0699">rRNA-binding</keyword>
<protein>
    <recommendedName>
        <fullName evidence="1">Small ribosomal subunit protein bS18</fullName>
    </recommendedName>
    <alternativeName>
        <fullName evidence="2">30S ribosomal protein S18</fullName>
    </alternativeName>
</protein>
<feature type="chain" id="PRO_1000059136" description="Small ribosomal subunit protein bS18">
    <location>
        <begin position="1"/>
        <end position="79"/>
    </location>
</feature>
<proteinExistence type="inferred from homology"/>
<dbReference type="EMBL" id="CP000813">
    <property type="protein sequence ID" value="ABV64362.1"/>
    <property type="molecule type" value="Genomic_DNA"/>
</dbReference>
<dbReference type="RefSeq" id="WP_008347556.1">
    <property type="nucleotide sequence ID" value="NZ_VEIS01000021.1"/>
</dbReference>
<dbReference type="SMR" id="A8FJE5"/>
<dbReference type="STRING" id="315750.BPUM_3718"/>
<dbReference type="GeneID" id="66361570"/>
<dbReference type="KEGG" id="bpu:BPUM_3718"/>
<dbReference type="eggNOG" id="COG0238">
    <property type="taxonomic scope" value="Bacteria"/>
</dbReference>
<dbReference type="HOGENOM" id="CLU_148710_2_2_9"/>
<dbReference type="OrthoDB" id="9812008at2"/>
<dbReference type="Proteomes" id="UP000001355">
    <property type="component" value="Chromosome"/>
</dbReference>
<dbReference type="GO" id="GO:0022627">
    <property type="term" value="C:cytosolic small ribosomal subunit"/>
    <property type="evidence" value="ECO:0007669"/>
    <property type="project" value="TreeGrafter"/>
</dbReference>
<dbReference type="GO" id="GO:0070181">
    <property type="term" value="F:small ribosomal subunit rRNA binding"/>
    <property type="evidence" value="ECO:0007669"/>
    <property type="project" value="TreeGrafter"/>
</dbReference>
<dbReference type="GO" id="GO:0003735">
    <property type="term" value="F:structural constituent of ribosome"/>
    <property type="evidence" value="ECO:0007669"/>
    <property type="project" value="InterPro"/>
</dbReference>
<dbReference type="GO" id="GO:0006412">
    <property type="term" value="P:translation"/>
    <property type="evidence" value="ECO:0007669"/>
    <property type="project" value="UniProtKB-UniRule"/>
</dbReference>
<dbReference type="FunFam" id="4.10.640.10:FF:000003">
    <property type="entry name" value="30S ribosomal protein S18"/>
    <property type="match status" value="1"/>
</dbReference>
<dbReference type="Gene3D" id="4.10.640.10">
    <property type="entry name" value="Ribosomal protein S18"/>
    <property type="match status" value="1"/>
</dbReference>
<dbReference type="HAMAP" id="MF_00270">
    <property type="entry name" value="Ribosomal_bS18"/>
    <property type="match status" value="1"/>
</dbReference>
<dbReference type="InterPro" id="IPR001648">
    <property type="entry name" value="Ribosomal_bS18"/>
</dbReference>
<dbReference type="InterPro" id="IPR018275">
    <property type="entry name" value="Ribosomal_bS18_CS"/>
</dbReference>
<dbReference type="InterPro" id="IPR036870">
    <property type="entry name" value="Ribosomal_bS18_sf"/>
</dbReference>
<dbReference type="NCBIfam" id="TIGR00165">
    <property type="entry name" value="S18"/>
    <property type="match status" value="1"/>
</dbReference>
<dbReference type="PANTHER" id="PTHR13479">
    <property type="entry name" value="30S RIBOSOMAL PROTEIN S18"/>
    <property type="match status" value="1"/>
</dbReference>
<dbReference type="PANTHER" id="PTHR13479:SF40">
    <property type="entry name" value="SMALL RIBOSOMAL SUBUNIT PROTEIN BS18M"/>
    <property type="match status" value="1"/>
</dbReference>
<dbReference type="Pfam" id="PF01084">
    <property type="entry name" value="Ribosomal_S18"/>
    <property type="match status" value="1"/>
</dbReference>
<dbReference type="PRINTS" id="PR00974">
    <property type="entry name" value="RIBOSOMALS18"/>
</dbReference>
<dbReference type="SUPFAM" id="SSF46911">
    <property type="entry name" value="Ribosomal protein S18"/>
    <property type="match status" value="1"/>
</dbReference>
<dbReference type="PROSITE" id="PS00057">
    <property type="entry name" value="RIBOSOMAL_S18"/>
    <property type="match status" value="1"/>
</dbReference>
<organism>
    <name type="scientific">Bacillus pumilus (strain SAFR-032)</name>
    <dbReference type="NCBI Taxonomy" id="315750"/>
    <lineage>
        <taxon>Bacteria</taxon>
        <taxon>Bacillati</taxon>
        <taxon>Bacillota</taxon>
        <taxon>Bacilli</taxon>
        <taxon>Bacillales</taxon>
        <taxon>Bacillaceae</taxon>
        <taxon>Bacillus</taxon>
    </lineage>
</organism>